<gene>
    <name evidence="14" type="primary">P450-3</name>
    <name type="ORF">FFUJ_14337</name>
</gene>
<dbReference type="EC" id="1.-.-.-" evidence="8"/>
<dbReference type="EMBL" id="HF679027">
    <property type="protein sequence ID" value="CCT69171.1"/>
    <property type="molecule type" value="Genomic_DNA"/>
</dbReference>
<dbReference type="SMR" id="S0E2Y2"/>
<dbReference type="STRING" id="1279085.S0E2Y2"/>
<dbReference type="EnsemblFungi" id="CCT69171">
    <property type="protein sequence ID" value="CCT69171"/>
    <property type="gene ID" value="FFUJ_14337"/>
</dbReference>
<dbReference type="VEuPathDB" id="FungiDB:FFUJ_14337"/>
<dbReference type="HOGENOM" id="CLU_022195_0_2_1"/>
<dbReference type="UniPathway" id="UPA00390"/>
<dbReference type="Proteomes" id="UP000016800">
    <property type="component" value="Chromosome 5"/>
</dbReference>
<dbReference type="GO" id="GO:0016020">
    <property type="term" value="C:membrane"/>
    <property type="evidence" value="ECO:0007669"/>
    <property type="project" value="UniProtKB-SubCell"/>
</dbReference>
<dbReference type="GO" id="GO:0020037">
    <property type="term" value="F:heme binding"/>
    <property type="evidence" value="ECO:0007669"/>
    <property type="project" value="InterPro"/>
</dbReference>
<dbReference type="GO" id="GO:0005506">
    <property type="term" value="F:iron ion binding"/>
    <property type="evidence" value="ECO:0007669"/>
    <property type="project" value="InterPro"/>
</dbReference>
<dbReference type="GO" id="GO:0004497">
    <property type="term" value="F:monooxygenase activity"/>
    <property type="evidence" value="ECO:0007669"/>
    <property type="project" value="UniProtKB-KW"/>
</dbReference>
<dbReference type="GO" id="GO:0016705">
    <property type="term" value="F:oxidoreductase activity, acting on paired donors, with incorporation or reduction of molecular oxygen"/>
    <property type="evidence" value="ECO:0007669"/>
    <property type="project" value="InterPro"/>
</dbReference>
<dbReference type="GO" id="GO:0009686">
    <property type="term" value="P:gibberellin biosynthetic process"/>
    <property type="evidence" value="ECO:0007669"/>
    <property type="project" value="UniProtKB-UniPathway"/>
</dbReference>
<dbReference type="GO" id="GO:0019748">
    <property type="term" value="P:secondary metabolic process"/>
    <property type="evidence" value="ECO:0007669"/>
    <property type="project" value="UniProtKB-ARBA"/>
</dbReference>
<dbReference type="CDD" id="cd11041">
    <property type="entry name" value="CYP503A1-like"/>
    <property type="match status" value="1"/>
</dbReference>
<dbReference type="Gene3D" id="1.10.630.10">
    <property type="entry name" value="Cytochrome P450"/>
    <property type="match status" value="1"/>
</dbReference>
<dbReference type="InterPro" id="IPR001128">
    <property type="entry name" value="Cyt_P450"/>
</dbReference>
<dbReference type="InterPro" id="IPR017972">
    <property type="entry name" value="Cyt_P450_CS"/>
</dbReference>
<dbReference type="InterPro" id="IPR002403">
    <property type="entry name" value="Cyt_P450_E_grp-IV"/>
</dbReference>
<dbReference type="InterPro" id="IPR036396">
    <property type="entry name" value="Cyt_P450_sf"/>
</dbReference>
<dbReference type="PANTHER" id="PTHR46206">
    <property type="entry name" value="CYTOCHROME P450"/>
    <property type="match status" value="1"/>
</dbReference>
<dbReference type="PANTHER" id="PTHR46206:SF6">
    <property type="entry name" value="CYTOCHROME P450 MONOOXYGENASE AN1598-RELATED"/>
    <property type="match status" value="1"/>
</dbReference>
<dbReference type="Pfam" id="PF00067">
    <property type="entry name" value="p450"/>
    <property type="match status" value="1"/>
</dbReference>
<dbReference type="PRINTS" id="PR00465">
    <property type="entry name" value="EP450IV"/>
</dbReference>
<dbReference type="SUPFAM" id="SSF48264">
    <property type="entry name" value="Cytochrome P450"/>
    <property type="match status" value="1"/>
</dbReference>
<dbReference type="PROSITE" id="PS00086">
    <property type="entry name" value="CYTOCHROME_P450"/>
    <property type="match status" value="1"/>
</dbReference>
<name>GA7_GIBF5</name>
<accession>S0E2Y2</accession>
<organism>
    <name type="scientific">Gibberella fujikuroi (strain CBS 195.34 / IMI 58289 / NRRL A-6831)</name>
    <name type="common">Bakanae and foot rot disease fungus</name>
    <name type="synonym">Fusarium fujikuroi</name>
    <dbReference type="NCBI Taxonomy" id="1279085"/>
    <lineage>
        <taxon>Eukaryota</taxon>
        <taxon>Fungi</taxon>
        <taxon>Dikarya</taxon>
        <taxon>Ascomycota</taxon>
        <taxon>Pezizomycotina</taxon>
        <taxon>Sordariomycetes</taxon>
        <taxon>Hypocreomycetidae</taxon>
        <taxon>Hypocreales</taxon>
        <taxon>Nectriaceae</taxon>
        <taxon>Fusarium</taxon>
        <taxon>Fusarium fujikuroi species complex</taxon>
    </lineage>
</organism>
<keyword id="KW-0349">Heme</keyword>
<keyword id="KW-0408">Iron</keyword>
<keyword id="KW-0472">Membrane</keyword>
<keyword id="KW-0479">Metal-binding</keyword>
<keyword id="KW-0503">Monooxygenase</keyword>
<keyword id="KW-0560">Oxidoreductase</keyword>
<keyword id="KW-1185">Reference proteome</keyword>
<keyword id="KW-0812">Transmembrane</keyword>
<keyword id="KW-1133">Transmembrane helix</keyword>
<proteinExistence type="evidence at protein level"/>
<protein>
    <recommendedName>
        <fullName evidence="14">Cytochrome P450 monooygenase 3</fullName>
        <shortName evidence="14">P450-3</shortName>
        <ecNumber evidence="8">1.-.-.-</ecNumber>
    </recommendedName>
    <alternativeName>
        <fullName evidence="13">Gibberellin 13-hydroxylase P450-3</fullName>
    </alternativeName>
</protein>
<reference key="1">
    <citation type="journal article" date="2013" name="PLoS Pathog.">
        <title>Deciphering the cryptic genome: genome-wide analyses of the rice pathogen Fusarium fujikuroi reveal complex regulation of secondary metabolism and novel metabolites.</title>
        <authorList>
            <person name="Wiemann P."/>
            <person name="Sieber C.M.K."/>
            <person name="von Bargen K.W."/>
            <person name="Studt L."/>
            <person name="Niehaus E.-M."/>
            <person name="Espino J.J."/>
            <person name="Huss K."/>
            <person name="Michielse C.B."/>
            <person name="Albermann S."/>
            <person name="Wagner D."/>
            <person name="Bergner S.V."/>
            <person name="Connolly L.R."/>
            <person name="Fischer A."/>
            <person name="Reuter G."/>
            <person name="Kleigrewe K."/>
            <person name="Bald T."/>
            <person name="Wingfield B.D."/>
            <person name="Ophir R."/>
            <person name="Freeman S."/>
            <person name="Hippler M."/>
            <person name="Smith K.M."/>
            <person name="Brown D.W."/>
            <person name="Proctor R.H."/>
            <person name="Muensterkoetter M."/>
            <person name="Freitag M."/>
            <person name="Humpf H.-U."/>
            <person name="Gueldener U."/>
            <person name="Tudzynski B."/>
        </authorList>
    </citation>
    <scope>NUCLEOTIDE SEQUENCE [LARGE SCALE GENOMIC DNA]</scope>
    <scope>FUNCTION</scope>
    <source>
        <strain>CBS 195.34 / IMI 58289 / NRRL A-6831</strain>
    </source>
</reference>
<reference key="2">
    <citation type="journal article" date="1998" name="Curr. Genet.">
        <title>Gibberellin biosynthesis in Gibberella fujikuroi: cloning and characterization of the copalyl diphosphate synthase gene.</title>
        <authorList>
            <person name="Tudzynski B."/>
            <person name="Kawaide H."/>
            <person name="Kamiya Y."/>
        </authorList>
    </citation>
    <scope>FUNCTION</scope>
</reference>
<reference key="3">
    <citation type="journal article" date="1998" name="Fungal Genet. Biol.">
        <title>Gibberellin biosynthetic pathway in Gibberella fujikuroi: evidence for a gene cluster.</title>
        <authorList>
            <person name="Tudzynski B."/>
            <person name="Hoelter K."/>
        </authorList>
    </citation>
    <scope>FUNCTION</scope>
    <scope>INDUCTION</scope>
    <scope>PATHWAY</scope>
</reference>
<reference key="4">
    <citation type="journal article" date="1999" name="Appl. Environ. Microbiol.">
        <title>Deletions in the gibberellin biosynthesis gene cluster of Gibberella fujikuroi by restriction enzyme-mediated integration and conventional transformation-mediated mutagenesis.</title>
        <authorList>
            <person name="Linnemannstoens P."/>
            <person name="Voss T."/>
            <person name="Hedden P."/>
            <person name="Gaskin P."/>
            <person name="Tudzynski B."/>
        </authorList>
    </citation>
    <scope>FUNCTION</scope>
</reference>
<reference key="5">
    <citation type="journal article" date="2000" name="Biosci. Biotechnol. Biochem.">
        <title>Cloning of a full-length cDNA encoding ent-kaurene synthase from Gibberella fujikuroi: functional analysis of a bifunctional diterpene cyclase.</title>
        <authorList>
            <person name="Toyomasu T."/>
            <person name="Kawaide H."/>
            <person name="Ishizaki A."/>
            <person name="Shinoda S."/>
            <person name="Otsuka M."/>
            <person name="Mitsuhashi W."/>
            <person name="Sassa T."/>
        </authorList>
    </citation>
    <scope>FUNCTION</scope>
</reference>
<reference key="6">
    <citation type="journal article" date="2001" name="Appl. Environ. Microbiol.">
        <title>The P450-4 gene of Gibberella fujikuroi encodes ent-kaurene oxidase in the gibberellin biosynthesis pathway.</title>
        <authorList>
            <person name="Tudzynski B."/>
            <person name="Hedden P."/>
            <person name="Carrera E."/>
            <person name="Gaskin P."/>
        </authorList>
    </citation>
    <scope>FUNCTION</scope>
</reference>
<reference key="7">
    <citation type="journal article" date="2001" name="Proc. Natl. Acad. Sci. U.S.A.">
        <title>The P450-1 gene of Gibberella fujikuroi encodes a multifunctional enzyme in gibberellin biosynthesis.</title>
        <authorList>
            <person name="Rojas M.C."/>
            <person name="Hedden P."/>
            <person name="Gaskin P."/>
            <person name="Tudzynski B."/>
        </authorList>
    </citation>
    <scope>FUNCTION</scope>
</reference>
<reference key="8">
    <citation type="journal article" date="2002" name="J. Biol. Chem.">
        <title>The gibberellin 20-oxidase of Gibberella fujikuroi is a multifunctional monooxygenase.</title>
        <authorList>
            <person name="Tudzynski B."/>
            <person name="Rojas M.C."/>
            <person name="Gaskin P."/>
            <person name="Hedden P."/>
        </authorList>
    </citation>
    <scope>FUNCTION</scope>
</reference>
<reference key="9">
    <citation type="journal article" date="2003" name="J. Biol. Chem.">
        <title>Characterization of the final two genes of the gibberellin biosynthesis gene cluster of Gibberella fujikuroi: des and P450-3 encode GA4 desaturase and the 13-hydroxylase, respectively.</title>
        <authorList>
            <person name="Tudzynski B."/>
            <person name="Mihlan M."/>
            <person name="Rojas M.C."/>
            <person name="Linnemannstons P."/>
            <person name="Gaskin P."/>
            <person name="Hedden P."/>
        </authorList>
    </citation>
    <scope>FUNCTION</scope>
    <scope>DISRUPTION PHENOTYPE</scope>
    <scope>CATALYTIC ACTIVITY</scope>
    <scope>PATHWAY</scope>
</reference>
<reference key="10">
    <citation type="journal article" date="2005" name="Phytochemistry">
        <title>Distribution of gibberellin biosynthetic genes and gibberellin production in the Gibberella fujikuroi species complex.</title>
        <authorList>
            <person name="Malonek S."/>
            <person name="Boemke C."/>
            <person name="Bornberg-Bauer E."/>
            <person name="Rojas M.C."/>
            <person name="Hedden P."/>
            <person name="Hopkins P."/>
            <person name="Tudzynski B."/>
        </authorList>
    </citation>
    <scope>FUNCTION</scope>
</reference>
<feature type="chain" id="PRO_0000442044" description="Cytochrome P450 monooygenase 3">
    <location>
        <begin position="1"/>
        <end position="527"/>
    </location>
</feature>
<feature type="transmembrane region" description="Helical" evidence="2">
    <location>
        <begin position="21"/>
        <end position="41"/>
    </location>
</feature>
<feature type="binding site" description="axial binding residue" evidence="1">
    <location>
        <position position="473"/>
    </location>
    <ligand>
        <name>heme</name>
        <dbReference type="ChEBI" id="CHEBI:30413"/>
    </ligand>
    <ligandPart>
        <name>Fe</name>
        <dbReference type="ChEBI" id="CHEBI:18248"/>
    </ligandPart>
</feature>
<sequence>MSNFVTLIEPLELTGSRVLRIAVAFAALCGATGLLAFSWWIYKQSSSKPTLPYPVVGDTHAQSLEKNLIKGMQQYRDSPFFLAGSRPPLLILPMSVFHEIHNMPNEYISIIVEHEDKFQGKYTHITTIRPEIPATIRQDLTRNMPNIILELQDELTYASDQWPRTSKWSSVSLYDMMLRTVALLSGRAFVGLPLCRDEGWLQASIGYTVQCVSIRDQLFTWSPVLRPIIGPFLPSVRSVRRHLRFAAEIMAPLISQALQDEKQHRADTLLADQTEGRGTFISWLLRHLPEELRTPEQVGLDQMLVSFAAIHTTTMALTKVVWELVKRPEYIEPLRTEMQDVFGPDAVSPDICINKEALSRLHKLDSFIREVQRWCPSTFVTPSRRVMKSMTLSNGIKLQRGTSIAFPAHAIHMSEETPTFSPDFSSDFENPSPRIFDGFRYLNLRSIKGQGSQHQAATTGPDYLIFNHGKHACPGRFFAISEIKMILIELLAKYDFRLEDGKPGPELMRVGTETRLDTKAGLEMRRR</sequence>
<comment type="function">
    <text evidence="3 4 5 6 7 8 9 10 11 12">Gibberellin 13-hydroxylase; part of the gene cluster that mediates the biosynthesis of gibberellins (GAs), diterpenoids that may provide a selective advantage during infection of the preferred host plant, rice (PubMed:10347043, PubMed:12750377, PubMed:15925394, PubMed:23825955, PubMed:9917370). Gibberellins (GAs) are diterpenoids and are synthesized via the mevalonate pathway (PubMed:12750377). Biosynthesis of the major metabolite GA3 (gibberellic acid) from geranylgeranyl diphosphate (GGPP) requires 13 steps (PubMed:12750377). The GGPP produced by the geranylgeranyl diphosphate synthase GGS2 is converted to ent-kaurene via ent-copalyldiphosphate in a two-step cyclization reaction performed by the bifunctional ent-copalyl diphosphate synthase/ent-kaurene synthase enzyme (CPS/KS) (PubMed:10803977, PubMed:12750377, PubMed:9745028). Ent-Kaurene is metabolized to GAs by a series of oxidation reactions catalyzed by cytochrome P450 monooxygenases (PubMed:12750377, PubMed:9917370). Cytochrome P450 monooxygenase P450-4 is an ent-kaurene oxidase that catalyzes the three oxidation steps between ent-kaurene and ent-kaurenoic acid (PubMed:11472927). The highly multifunctional cytochrome P450 monooxygenase P450-1 then catalyzes four steps involving oxidation at two carbon atoms, in the main pathway from ent-kaurenoic acid to GA14 via GA12-aldehyde as well as producing kaurenolides and fujenoic acids as by-products (PubMed:11320210). The cytochrome P450 monooxygenase P450-2 then converts GA14 to GA4 by removal of C-20 (PubMed:11943776). GA4 is further converted to GA7 by the GA4 desaturase DES via 1,2-desaturation before cytochrome P450 monooxygenase P450-3, a 13-hydroxylase, hydroxylates GA7 to GA3, the final product of the GA-biosynthetic pathway (PubMed:12750377).</text>
</comment>
<comment type="cofactor">
    <cofactor evidence="1">
        <name>heme</name>
        <dbReference type="ChEBI" id="CHEBI:30413"/>
    </cofactor>
</comment>
<comment type="pathway">
    <text evidence="8 12">Plant hormone biosynthesis; gibberellin biosynthesis.</text>
</comment>
<comment type="subcellular location">
    <subcellularLocation>
        <location evidence="2">Membrane</location>
        <topology evidence="2">Single-pass membrane protein</topology>
    </subcellularLocation>
</comment>
<comment type="induction">
    <text evidence="12">Expression is induced under gibberellin-producing conditions (PubMed:9917370).</text>
</comment>
<comment type="disruption phenotype">
    <text evidence="8">Impairs the production of GA3, although its precursors, GA4 and GA7, are present (PubMed:12750377).</text>
</comment>
<comment type="similarity">
    <text evidence="15">Belongs to the cytochrome P450 family.</text>
</comment>
<evidence type="ECO:0000250" key="1">
    <source>
        <dbReference type="UniProtKB" id="P04798"/>
    </source>
</evidence>
<evidence type="ECO:0000255" key="2"/>
<evidence type="ECO:0000269" key="3">
    <source>
    </source>
</evidence>
<evidence type="ECO:0000269" key="4">
    <source>
    </source>
</evidence>
<evidence type="ECO:0000269" key="5">
    <source>
    </source>
</evidence>
<evidence type="ECO:0000269" key="6">
    <source>
    </source>
</evidence>
<evidence type="ECO:0000269" key="7">
    <source>
    </source>
</evidence>
<evidence type="ECO:0000269" key="8">
    <source>
    </source>
</evidence>
<evidence type="ECO:0000269" key="9">
    <source>
    </source>
</evidence>
<evidence type="ECO:0000269" key="10">
    <source>
    </source>
</evidence>
<evidence type="ECO:0000269" key="11">
    <source>
    </source>
</evidence>
<evidence type="ECO:0000269" key="12">
    <source>
    </source>
</evidence>
<evidence type="ECO:0000303" key="13">
    <source>
    </source>
</evidence>
<evidence type="ECO:0000303" key="14">
    <source>
    </source>
</evidence>
<evidence type="ECO:0000305" key="15"/>